<dbReference type="EC" id="7.2.2.-"/>
<dbReference type="EMBL" id="L43967">
    <property type="protein sequence ID" value="AAC71289.1"/>
    <property type="molecule type" value="Genomic_DNA"/>
</dbReference>
<dbReference type="EMBL" id="X61532">
    <property type="protein sequence ID" value="CAA43744.1"/>
    <property type="molecule type" value="Genomic_DNA"/>
</dbReference>
<dbReference type="PIR" id="H64207">
    <property type="entry name" value="H64207"/>
</dbReference>
<dbReference type="RefSeq" id="WP_009885927.1">
    <property type="nucleotide sequence ID" value="NC_000908.2"/>
</dbReference>
<dbReference type="SMR" id="P47317"/>
<dbReference type="FunCoup" id="P47317">
    <property type="interactions" value="116"/>
</dbReference>
<dbReference type="STRING" id="243273.MG_071"/>
<dbReference type="GeneID" id="88282194"/>
<dbReference type="KEGG" id="mge:MG_071"/>
<dbReference type="eggNOG" id="COG0474">
    <property type="taxonomic scope" value="Bacteria"/>
</dbReference>
<dbReference type="HOGENOM" id="CLU_002360_1_1_14"/>
<dbReference type="InParanoid" id="P47317"/>
<dbReference type="OrthoDB" id="9813266at2"/>
<dbReference type="BioCyc" id="MGEN243273:G1GJ2-83-MONOMER"/>
<dbReference type="Proteomes" id="UP000000807">
    <property type="component" value="Chromosome"/>
</dbReference>
<dbReference type="GO" id="GO:0016020">
    <property type="term" value="C:membrane"/>
    <property type="evidence" value="ECO:0000318"/>
    <property type="project" value="GO_Central"/>
</dbReference>
<dbReference type="GO" id="GO:0005886">
    <property type="term" value="C:plasma membrane"/>
    <property type="evidence" value="ECO:0007669"/>
    <property type="project" value="UniProtKB-SubCell"/>
</dbReference>
<dbReference type="GO" id="GO:0005524">
    <property type="term" value="F:ATP binding"/>
    <property type="evidence" value="ECO:0007669"/>
    <property type="project" value="UniProtKB-KW"/>
</dbReference>
<dbReference type="GO" id="GO:0016887">
    <property type="term" value="F:ATP hydrolysis activity"/>
    <property type="evidence" value="ECO:0007669"/>
    <property type="project" value="InterPro"/>
</dbReference>
<dbReference type="GO" id="GO:0046872">
    <property type="term" value="F:metal ion binding"/>
    <property type="evidence" value="ECO:0007669"/>
    <property type="project" value="UniProtKB-KW"/>
</dbReference>
<dbReference type="GO" id="GO:0015662">
    <property type="term" value="F:P-type ion transporter activity"/>
    <property type="evidence" value="ECO:0000318"/>
    <property type="project" value="GO_Central"/>
</dbReference>
<dbReference type="GO" id="GO:0034220">
    <property type="term" value="P:monoatomic ion transmembrane transport"/>
    <property type="evidence" value="ECO:0000318"/>
    <property type="project" value="GO_Central"/>
</dbReference>
<dbReference type="FunFam" id="1.20.1110.10:FF:000154">
    <property type="match status" value="1"/>
</dbReference>
<dbReference type="FunFam" id="3.40.1110.10:FF:000256">
    <property type="entry name" value="Probable cation-transporting P-type ATPase"/>
    <property type="match status" value="1"/>
</dbReference>
<dbReference type="Gene3D" id="3.40.1110.10">
    <property type="entry name" value="Calcium-transporting ATPase, cytoplasmic domain N"/>
    <property type="match status" value="2"/>
</dbReference>
<dbReference type="Gene3D" id="2.70.150.10">
    <property type="entry name" value="Calcium-transporting ATPase, cytoplasmic transduction domain A"/>
    <property type="match status" value="1"/>
</dbReference>
<dbReference type="Gene3D" id="1.20.1110.10">
    <property type="entry name" value="Calcium-transporting ATPase, transmembrane domain"/>
    <property type="match status" value="2"/>
</dbReference>
<dbReference type="Gene3D" id="3.40.50.1000">
    <property type="entry name" value="HAD superfamily/HAD-like"/>
    <property type="match status" value="2"/>
</dbReference>
<dbReference type="InterPro" id="IPR006068">
    <property type="entry name" value="ATPase_P-typ_cation-transptr_C"/>
</dbReference>
<dbReference type="InterPro" id="IPR004014">
    <property type="entry name" value="ATPase_P-typ_cation-transptr_N"/>
</dbReference>
<dbReference type="InterPro" id="IPR023299">
    <property type="entry name" value="ATPase_P-typ_cyto_dom_N"/>
</dbReference>
<dbReference type="InterPro" id="IPR018303">
    <property type="entry name" value="ATPase_P-typ_P_site"/>
</dbReference>
<dbReference type="InterPro" id="IPR023298">
    <property type="entry name" value="ATPase_P-typ_TM_dom_sf"/>
</dbReference>
<dbReference type="InterPro" id="IPR008250">
    <property type="entry name" value="ATPase_P-typ_transduc_dom_A_sf"/>
</dbReference>
<dbReference type="InterPro" id="IPR036412">
    <property type="entry name" value="HAD-like_sf"/>
</dbReference>
<dbReference type="InterPro" id="IPR023214">
    <property type="entry name" value="HAD_sf"/>
</dbReference>
<dbReference type="InterPro" id="IPR001757">
    <property type="entry name" value="P_typ_ATPase"/>
</dbReference>
<dbReference type="InterPro" id="IPR044492">
    <property type="entry name" value="P_typ_ATPase_HD_dom"/>
</dbReference>
<dbReference type="NCBIfam" id="TIGR01494">
    <property type="entry name" value="ATPase_P-type"/>
    <property type="match status" value="4"/>
</dbReference>
<dbReference type="PANTHER" id="PTHR42861">
    <property type="entry name" value="CALCIUM-TRANSPORTING ATPASE"/>
    <property type="match status" value="1"/>
</dbReference>
<dbReference type="Pfam" id="PF00689">
    <property type="entry name" value="Cation_ATPase_C"/>
    <property type="match status" value="1"/>
</dbReference>
<dbReference type="Pfam" id="PF00690">
    <property type="entry name" value="Cation_ATPase_N"/>
    <property type="match status" value="1"/>
</dbReference>
<dbReference type="Pfam" id="PF00122">
    <property type="entry name" value="E1-E2_ATPase"/>
    <property type="match status" value="1"/>
</dbReference>
<dbReference type="Pfam" id="PF00702">
    <property type="entry name" value="Hydrolase"/>
    <property type="match status" value="1"/>
</dbReference>
<dbReference type="PRINTS" id="PR00119">
    <property type="entry name" value="CATATPASE"/>
</dbReference>
<dbReference type="PRINTS" id="PR00120">
    <property type="entry name" value="HATPASE"/>
</dbReference>
<dbReference type="SFLD" id="SFLDS00003">
    <property type="entry name" value="Haloacid_Dehalogenase"/>
    <property type="match status" value="1"/>
</dbReference>
<dbReference type="SFLD" id="SFLDF00027">
    <property type="entry name" value="p-type_atpase"/>
    <property type="match status" value="1"/>
</dbReference>
<dbReference type="SMART" id="SM00831">
    <property type="entry name" value="Cation_ATPase_N"/>
    <property type="match status" value="1"/>
</dbReference>
<dbReference type="SUPFAM" id="SSF81653">
    <property type="entry name" value="Calcium ATPase, transduction domain A"/>
    <property type="match status" value="1"/>
</dbReference>
<dbReference type="SUPFAM" id="SSF81665">
    <property type="entry name" value="Calcium ATPase, transmembrane domain M"/>
    <property type="match status" value="1"/>
</dbReference>
<dbReference type="SUPFAM" id="SSF56784">
    <property type="entry name" value="HAD-like"/>
    <property type="match status" value="1"/>
</dbReference>
<dbReference type="PROSITE" id="PS00154">
    <property type="entry name" value="ATPASE_E1_E2"/>
    <property type="match status" value="1"/>
</dbReference>
<feature type="chain" id="PRO_0000046162" description="Probable cation-transporting P-type ATPase">
    <location>
        <begin position="1"/>
        <end position="874"/>
    </location>
</feature>
<feature type="topological domain" description="Cytoplasmic" evidence="2">
    <location>
        <begin position="1"/>
        <end position="41"/>
    </location>
</feature>
<feature type="transmembrane region" description="Helical" evidence="2">
    <location>
        <begin position="42"/>
        <end position="62"/>
    </location>
</feature>
<feature type="topological domain" description="Extracellular" evidence="2">
    <location>
        <begin position="63"/>
        <end position="79"/>
    </location>
</feature>
<feature type="transmembrane region" description="Helical" evidence="2">
    <location>
        <begin position="80"/>
        <end position="100"/>
    </location>
</feature>
<feature type="topological domain" description="Cytoplasmic" evidence="2">
    <location>
        <begin position="101"/>
        <end position="237"/>
    </location>
</feature>
<feature type="transmembrane region" description="Helical" evidence="2">
    <location>
        <begin position="238"/>
        <end position="257"/>
    </location>
</feature>
<feature type="topological domain" description="Extracellular" evidence="2">
    <location>
        <begin position="258"/>
        <end position="275"/>
    </location>
</feature>
<feature type="transmembrane region" description="Helical" evidence="2">
    <location>
        <begin position="276"/>
        <end position="293"/>
    </location>
</feature>
<feature type="topological domain" description="Cytoplasmic" evidence="2">
    <location>
        <begin position="294"/>
        <end position="644"/>
    </location>
</feature>
<feature type="transmembrane region" description="Helical" evidence="2">
    <location>
        <begin position="645"/>
        <end position="664"/>
    </location>
</feature>
<feature type="topological domain" description="Extracellular" evidence="2">
    <location>
        <begin position="665"/>
        <end position="687"/>
    </location>
</feature>
<feature type="transmembrane region" description="Helical" evidence="2">
    <location>
        <begin position="688"/>
        <end position="708"/>
    </location>
</feature>
<feature type="topological domain" description="Cytoplasmic" evidence="2">
    <location>
        <begin position="709"/>
        <end position="726"/>
    </location>
</feature>
<feature type="transmembrane region" description="Helical" evidence="2">
    <location>
        <begin position="727"/>
        <end position="749"/>
    </location>
</feature>
<feature type="topological domain" description="Extracellular" evidence="2">
    <location>
        <begin position="750"/>
        <end position="770"/>
    </location>
</feature>
<feature type="transmembrane region" description="Helical" evidence="2">
    <location>
        <begin position="771"/>
        <end position="790"/>
    </location>
</feature>
<feature type="topological domain" description="Cytoplasmic" evidence="2">
    <location>
        <begin position="791"/>
        <end position="803"/>
    </location>
</feature>
<feature type="transmembrane region" description="Helical" evidence="2">
    <location>
        <begin position="804"/>
        <end position="826"/>
    </location>
</feature>
<feature type="topological domain" description="Extracellular" evidence="2">
    <location>
        <begin position="827"/>
        <end position="844"/>
    </location>
</feature>
<feature type="transmembrane region" description="Helical" evidence="2">
    <location>
        <begin position="845"/>
        <end position="865"/>
    </location>
</feature>
<feature type="topological domain" description="Cytoplasmic" evidence="2">
    <location>
        <begin position="866"/>
        <end position="874"/>
    </location>
</feature>
<feature type="active site" description="4-aspartylphosphate intermediate" evidence="1">
    <location>
        <position position="331"/>
    </location>
</feature>
<feature type="binding site" evidence="1">
    <location>
        <position position="589"/>
    </location>
    <ligand>
        <name>Mg(2+)</name>
        <dbReference type="ChEBI" id="CHEBI:18420"/>
    </ligand>
</feature>
<feature type="binding site" evidence="1">
    <location>
        <position position="593"/>
    </location>
    <ligand>
        <name>Mg(2+)</name>
        <dbReference type="ChEBI" id="CHEBI:18420"/>
    </ligand>
</feature>
<keyword id="KW-0067">ATP-binding</keyword>
<keyword id="KW-1003">Cell membrane</keyword>
<keyword id="KW-0460">Magnesium</keyword>
<keyword id="KW-0472">Membrane</keyword>
<keyword id="KW-0479">Metal-binding</keyword>
<keyword id="KW-0547">Nucleotide-binding</keyword>
<keyword id="KW-0597">Phosphoprotein</keyword>
<keyword id="KW-1185">Reference proteome</keyword>
<keyword id="KW-1278">Translocase</keyword>
<keyword id="KW-0812">Transmembrane</keyword>
<keyword id="KW-1133">Transmembrane helix</keyword>
<name>ATCL_MYCGE</name>
<organism>
    <name type="scientific">Mycoplasma genitalium (strain ATCC 33530 / DSM 19775 / NCTC 10195 / G37)</name>
    <name type="common">Mycoplasmoides genitalium</name>
    <dbReference type="NCBI Taxonomy" id="243273"/>
    <lineage>
        <taxon>Bacteria</taxon>
        <taxon>Bacillati</taxon>
        <taxon>Mycoplasmatota</taxon>
        <taxon>Mycoplasmoidales</taxon>
        <taxon>Mycoplasmoidaceae</taxon>
        <taxon>Mycoplasmoides</taxon>
    </lineage>
</organism>
<proteinExistence type="inferred from homology"/>
<comment type="function">
    <text>Could mediate calcium influx.</text>
</comment>
<comment type="catalytic activity">
    <reaction>
        <text>ATP + H2O = ADP + phosphate + H(+)</text>
        <dbReference type="Rhea" id="RHEA:13065"/>
        <dbReference type="ChEBI" id="CHEBI:15377"/>
        <dbReference type="ChEBI" id="CHEBI:15378"/>
        <dbReference type="ChEBI" id="CHEBI:30616"/>
        <dbReference type="ChEBI" id="CHEBI:43474"/>
        <dbReference type="ChEBI" id="CHEBI:456216"/>
    </reaction>
</comment>
<comment type="subcellular location">
    <subcellularLocation>
        <location>Cell membrane</location>
        <topology>Multi-pass membrane protein</topology>
    </subcellularLocation>
</comment>
<comment type="similarity">
    <text evidence="3">Belongs to the cation transport ATPase (P-type) (TC 3.A.3) family. Type II subfamily.</text>
</comment>
<sequence length="874" mass="96318">MNSWTGLSEQAAIKSRQEHGANFLPEKKATPFWLLFLQQFKSLVVILLLLASLLSFVVAIVSGLRSNWNFNHDLIIEWVQPFIILLTVFANSLIGSIQEFKAQKSASALKSLTKSFTRVFRNGELISINVSEVVVGDIIFVDAGDIIPADGKLLQVNNLRCLESFLTGESTPVDKTIDSNEKATILEQTNLVFSGAQVVYGSGVFQVEAVGIKTQVGKIAKTVDDSVTKLSPLQQKLEKIGKWFSWFGLGLFAVVFLVQTALLGFDNFTNNWSIALIGAIALVVAIIPEGLVTFINVIFALSVQKLTKQKAIIKYLSVIETLGSVQIICTDKTGTLTQNQMKVVDHFCFNSTTQTDLARALCLCNNASISKDANKTGDPTEIALLEWKDRSQLDLKTYYRVYEKAFDSIRKLMTVVVQKDNRFIVIVKGAPDVLLPLCNNVQNEVKNIENLLDQSAGQGLRTLAVALKVLYKFDQNDQKQIDELENNLEFLGFVSLQDPPRKESKEAILACKKANITPIMITGDHLKTATVIAKELGILTLDNQAVLGSELDEKKILDYRVFARVTPQQKLAIVSAWKEAGFTVSVTGDGVNDAPALIKSDVGCCMGITGVDIAKDASDLIISDDNFATIVNGIEEGRKTFLTCKRVLLNLFLTSIAGTVVVLLGLFILGQVFKTNLLQQGHDFQVFSPTQLLIINLFVHGFPAVALAVQPVKEKLMVGSFSTKNLFYNRQGFDLIWQSLFLSFLTLLFYSLGIIYAINNRDLQTSGDLINRAGSTCGFFILGASAALNSLNLMVDKPLLMTNPWFFKLVWIGSLASILVFLLIIFINPLGLVFNVLQDLTNHPVLISYSFGGVILYMGMNEVVKLIRLGYGNI</sequence>
<protein>
    <recommendedName>
        <fullName>Probable cation-transporting P-type ATPase</fullName>
        <ecNumber>7.2.2.-</ecNumber>
    </recommendedName>
</protein>
<reference key="1">
    <citation type="journal article" date="1995" name="Science">
        <title>The minimal gene complement of Mycoplasma genitalium.</title>
        <authorList>
            <person name="Fraser C.M."/>
            <person name="Gocayne J.D."/>
            <person name="White O."/>
            <person name="Adams M.D."/>
            <person name="Clayton R.A."/>
            <person name="Fleischmann R.D."/>
            <person name="Bult C.J."/>
            <person name="Kerlavage A.R."/>
            <person name="Sutton G.G."/>
            <person name="Kelley J.M."/>
            <person name="Fritchman J.L."/>
            <person name="Weidman J.F."/>
            <person name="Small K.V."/>
            <person name="Sandusky M."/>
            <person name="Fuhrmann J.L."/>
            <person name="Nguyen D.T."/>
            <person name="Utterback T.R."/>
            <person name="Saudek D.M."/>
            <person name="Phillips C.A."/>
            <person name="Merrick J.M."/>
            <person name="Tomb J.-F."/>
            <person name="Dougherty B.A."/>
            <person name="Bott K.F."/>
            <person name="Hu P.-C."/>
            <person name="Lucier T.S."/>
            <person name="Peterson S.N."/>
            <person name="Smith H.O."/>
            <person name="Hutchison C.A. III"/>
            <person name="Venter J.C."/>
        </authorList>
    </citation>
    <scope>NUCLEOTIDE SEQUENCE [LARGE SCALE GENOMIC DNA]</scope>
    <source>
        <strain>ATCC 33530 / DSM 19775 / NCTC 10195 / G37</strain>
    </source>
</reference>
<reference key="2">
    <citation type="journal article" date="1991" name="Nucleic Acids Res.">
        <title>A random sequencing approach for placing markers on the physical map of Mycoplasma genitalium.</title>
        <authorList>
            <person name="Peterson S.N."/>
            <person name="Schramm N."/>
            <person name="Hu P.-C."/>
            <person name="Bott K.F."/>
            <person name="Hutchison C.A. III"/>
        </authorList>
    </citation>
    <scope>NUCLEOTIDE SEQUENCE [GENOMIC DNA] OF 404-490</scope>
    <source>
        <strain>ATCC 33530 / DSM 19775 / NCTC 10195 / G37</strain>
    </source>
</reference>
<accession>P47317</accession>
<gene>
    <name type="primary">pacL</name>
    <name type="ordered locus">MG071</name>
</gene>
<evidence type="ECO:0000250" key="1"/>
<evidence type="ECO:0000255" key="2"/>
<evidence type="ECO:0000305" key="3"/>